<accession>B4U476</accession>
<proteinExistence type="inferred from homology"/>
<keyword id="KW-0488">Methylation</keyword>
<keyword id="KW-0687">Ribonucleoprotein</keyword>
<keyword id="KW-0689">Ribosomal protein</keyword>
<keyword id="KW-0694">RNA-binding</keyword>
<keyword id="KW-0699">rRNA-binding</keyword>
<organism>
    <name type="scientific">Streptococcus equi subsp. zooepidemicus (strain MGCS10565)</name>
    <dbReference type="NCBI Taxonomy" id="552526"/>
    <lineage>
        <taxon>Bacteria</taxon>
        <taxon>Bacillati</taxon>
        <taxon>Bacillota</taxon>
        <taxon>Bacilli</taxon>
        <taxon>Lactobacillales</taxon>
        <taxon>Streptococcaceae</taxon>
        <taxon>Streptococcus</taxon>
    </lineage>
</organism>
<feature type="chain" id="PRO_1000195721" description="Large ribosomal subunit protein uL11">
    <location>
        <begin position="1"/>
        <end position="141"/>
    </location>
</feature>
<gene>
    <name evidence="1" type="primary">rplK</name>
    <name type="ordered locus">Sez_1460</name>
</gene>
<sequence>MAKKVEKLVKLQIPAGKATPAPPVGPALGQAGINIMGFTKEFNARTADQAGMIIPVVISVYEDKSFDFITKTPPAAVLLKKAAGVEKGSGTPNKTKVATVTRAQVQEIAETKMPDLNAANIEAAMRMIEGTARSMGFTVTD</sequence>
<name>RL11_STREM</name>
<reference key="1">
    <citation type="journal article" date="2008" name="PLoS ONE">
        <title>Genome sequence of a lancefield group C Streptococcus zooepidemicus strain causing epidemic nephritis: new information about an old disease.</title>
        <authorList>
            <person name="Beres S.B."/>
            <person name="Sesso R."/>
            <person name="Pinto S.W.L."/>
            <person name="Hoe N.P."/>
            <person name="Porcella S.F."/>
            <person name="Deleo F.R."/>
            <person name="Musser J.M."/>
        </authorList>
    </citation>
    <scope>NUCLEOTIDE SEQUENCE [LARGE SCALE GENOMIC DNA]</scope>
    <source>
        <strain>MGCS10565</strain>
    </source>
</reference>
<protein>
    <recommendedName>
        <fullName evidence="1">Large ribosomal subunit protein uL11</fullName>
    </recommendedName>
    <alternativeName>
        <fullName evidence="2">50S ribosomal protein L11</fullName>
    </alternativeName>
</protein>
<evidence type="ECO:0000255" key="1">
    <source>
        <dbReference type="HAMAP-Rule" id="MF_00736"/>
    </source>
</evidence>
<evidence type="ECO:0000305" key="2"/>
<comment type="function">
    <text evidence="1">Forms part of the ribosomal stalk which helps the ribosome interact with GTP-bound translation factors.</text>
</comment>
<comment type="subunit">
    <text evidence="1">Part of the ribosomal stalk of the 50S ribosomal subunit. Interacts with L10 and the large rRNA to form the base of the stalk. L10 forms an elongated spine to which L12 dimers bind in a sequential fashion forming a multimeric L10(L12)X complex.</text>
</comment>
<comment type="PTM">
    <text evidence="1">One or more lysine residues are methylated.</text>
</comment>
<comment type="similarity">
    <text evidence="1">Belongs to the universal ribosomal protein uL11 family.</text>
</comment>
<dbReference type="EMBL" id="CP001129">
    <property type="protein sequence ID" value="ACG62793.1"/>
    <property type="molecule type" value="Genomic_DNA"/>
</dbReference>
<dbReference type="RefSeq" id="WP_003049875.1">
    <property type="nucleotide sequence ID" value="NC_011134.1"/>
</dbReference>
<dbReference type="SMR" id="B4U476"/>
<dbReference type="GeneID" id="83705329"/>
<dbReference type="KEGG" id="sez:Sez_1460"/>
<dbReference type="HOGENOM" id="CLU_074237_2_1_9"/>
<dbReference type="Proteomes" id="UP000001873">
    <property type="component" value="Chromosome"/>
</dbReference>
<dbReference type="GO" id="GO:0022625">
    <property type="term" value="C:cytosolic large ribosomal subunit"/>
    <property type="evidence" value="ECO:0007669"/>
    <property type="project" value="TreeGrafter"/>
</dbReference>
<dbReference type="GO" id="GO:0070180">
    <property type="term" value="F:large ribosomal subunit rRNA binding"/>
    <property type="evidence" value="ECO:0007669"/>
    <property type="project" value="UniProtKB-UniRule"/>
</dbReference>
<dbReference type="GO" id="GO:0003735">
    <property type="term" value="F:structural constituent of ribosome"/>
    <property type="evidence" value="ECO:0007669"/>
    <property type="project" value="InterPro"/>
</dbReference>
<dbReference type="GO" id="GO:0006412">
    <property type="term" value="P:translation"/>
    <property type="evidence" value="ECO:0007669"/>
    <property type="project" value="UniProtKB-UniRule"/>
</dbReference>
<dbReference type="CDD" id="cd00349">
    <property type="entry name" value="Ribosomal_L11"/>
    <property type="match status" value="1"/>
</dbReference>
<dbReference type="FunFam" id="1.10.10.250:FF:000001">
    <property type="entry name" value="50S ribosomal protein L11"/>
    <property type="match status" value="1"/>
</dbReference>
<dbReference type="FunFam" id="3.30.1550.10:FF:000001">
    <property type="entry name" value="50S ribosomal protein L11"/>
    <property type="match status" value="1"/>
</dbReference>
<dbReference type="Gene3D" id="1.10.10.250">
    <property type="entry name" value="Ribosomal protein L11, C-terminal domain"/>
    <property type="match status" value="1"/>
</dbReference>
<dbReference type="Gene3D" id="3.30.1550.10">
    <property type="entry name" value="Ribosomal protein L11/L12, N-terminal domain"/>
    <property type="match status" value="1"/>
</dbReference>
<dbReference type="HAMAP" id="MF_00736">
    <property type="entry name" value="Ribosomal_uL11"/>
    <property type="match status" value="1"/>
</dbReference>
<dbReference type="InterPro" id="IPR000911">
    <property type="entry name" value="Ribosomal_uL11"/>
</dbReference>
<dbReference type="InterPro" id="IPR006519">
    <property type="entry name" value="Ribosomal_uL11_bac-typ"/>
</dbReference>
<dbReference type="InterPro" id="IPR020783">
    <property type="entry name" value="Ribosomal_uL11_C"/>
</dbReference>
<dbReference type="InterPro" id="IPR036769">
    <property type="entry name" value="Ribosomal_uL11_C_sf"/>
</dbReference>
<dbReference type="InterPro" id="IPR020785">
    <property type="entry name" value="Ribosomal_uL11_CS"/>
</dbReference>
<dbReference type="InterPro" id="IPR020784">
    <property type="entry name" value="Ribosomal_uL11_N"/>
</dbReference>
<dbReference type="InterPro" id="IPR036796">
    <property type="entry name" value="Ribosomal_uL11_N_sf"/>
</dbReference>
<dbReference type="NCBIfam" id="TIGR01632">
    <property type="entry name" value="L11_bact"/>
    <property type="match status" value="1"/>
</dbReference>
<dbReference type="PANTHER" id="PTHR11661">
    <property type="entry name" value="60S RIBOSOMAL PROTEIN L12"/>
    <property type="match status" value="1"/>
</dbReference>
<dbReference type="PANTHER" id="PTHR11661:SF1">
    <property type="entry name" value="LARGE RIBOSOMAL SUBUNIT PROTEIN UL11M"/>
    <property type="match status" value="1"/>
</dbReference>
<dbReference type="Pfam" id="PF00298">
    <property type="entry name" value="Ribosomal_L11"/>
    <property type="match status" value="1"/>
</dbReference>
<dbReference type="Pfam" id="PF03946">
    <property type="entry name" value="Ribosomal_L11_N"/>
    <property type="match status" value="1"/>
</dbReference>
<dbReference type="SMART" id="SM00649">
    <property type="entry name" value="RL11"/>
    <property type="match status" value="1"/>
</dbReference>
<dbReference type="SUPFAM" id="SSF54747">
    <property type="entry name" value="Ribosomal L11/L12e N-terminal domain"/>
    <property type="match status" value="1"/>
</dbReference>
<dbReference type="SUPFAM" id="SSF46906">
    <property type="entry name" value="Ribosomal protein L11, C-terminal domain"/>
    <property type="match status" value="1"/>
</dbReference>
<dbReference type="PROSITE" id="PS00359">
    <property type="entry name" value="RIBOSOMAL_L11"/>
    <property type="match status" value="1"/>
</dbReference>